<sequence length="159" mass="17846">MEKIASFTIDHTKLKRGVYVSRQDKVAGNVITTFDLRLKEPNNEPALDGAASHTIEHIGATFLRNHKTWADRTIYFGPMGCQTGFYLILAGDWKAKDIVPLMQEMFAYVAQFTGTIPGESAVECGNFRFMDLIQAKEEAGKYFTEVLDNIAEKNLSYPS</sequence>
<reference key="1">
    <citation type="journal article" date="2004" name="Environ. Microbiol.">
        <title>The genome of Desulfotalea psychrophila, a sulfate-reducing bacterium from permanently cold Arctic sediments.</title>
        <authorList>
            <person name="Rabus R."/>
            <person name="Ruepp A."/>
            <person name="Frickey T."/>
            <person name="Rattei T."/>
            <person name="Fartmann B."/>
            <person name="Stark M."/>
            <person name="Bauer M."/>
            <person name="Zibat A."/>
            <person name="Lombardot T."/>
            <person name="Becker I."/>
            <person name="Amann J."/>
            <person name="Gellner K."/>
            <person name="Teeling H."/>
            <person name="Leuschner W.D."/>
            <person name="Gloeckner F.-O."/>
            <person name="Lupas A.N."/>
            <person name="Amann R."/>
            <person name="Klenk H.-P."/>
        </authorList>
    </citation>
    <scope>NUCLEOTIDE SEQUENCE [LARGE SCALE GENOMIC DNA]</scope>
    <source>
        <strain>DSM 12343 / LSv54</strain>
    </source>
</reference>
<evidence type="ECO:0000255" key="1">
    <source>
        <dbReference type="HAMAP-Rule" id="MF_00091"/>
    </source>
</evidence>
<dbReference type="EC" id="4.4.1.21" evidence="1"/>
<dbReference type="EMBL" id="CR522870">
    <property type="protein sequence ID" value="CAG35258.1"/>
    <property type="molecule type" value="Genomic_DNA"/>
</dbReference>
<dbReference type="RefSeq" id="WP_011187774.1">
    <property type="nucleotide sequence ID" value="NC_006138.1"/>
</dbReference>
<dbReference type="SMR" id="Q6AQW6"/>
<dbReference type="STRING" id="177439.DP0529"/>
<dbReference type="KEGG" id="dps:DP0529"/>
<dbReference type="eggNOG" id="COG1854">
    <property type="taxonomic scope" value="Bacteria"/>
</dbReference>
<dbReference type="HOGENOM" id="CLU_107531_1_0_7"/>
<dbReference type="OrthoDB" id="9788129at2"/>
<dbReference type="Proteomes" id="UP000000602">
    <property type="component" value="Chromosome"/>
</dbReference>
<dbReference type="GO" id="GO:0005506">
    <property type="term" value="F:iron ion binding"/>
    <property type="evidence" value="ECO:0007669"/>
    <property type="project" value="InterPro"/>
</dbReference>
<dbReference type="GO" id="GO:0043768">
    <property type="term" value="F:S-ribosylhomocysteine lyase activity"/>
    <property type="evidence" value="ECO:0007669"/>
    <property type="project" value="UniProtKB-UniRule"/>
</dbReference>
<dbReference type="GO" id="GO:0009372">
    <property type="term" value="P:quorum sensing"/>
    <property type="evidence" value="ECO:0007669"/>
    <property type="project" value="UniProtKB-UniRule"/>
</dbReference>
<dbReference type="Gene3D" id="3.30.1360.80">
    <property type="entry name" value="S-ribosylhomocysteinase (LuxS)"/>
    <property type="match status" value="1"/>
</dbReference>
<dbReference type="HAMAP" id="MF_00091">
    <property type="entry name" value="LuxS"/>
    <property type="match status" value="1"/>
</dbReference>
<dbReference type="InterPro" id="IPR037005">
    <property type="entry name" value="LuxS_sf"/>
</dbReference>
<dbReference type="InterPro" id="IPR011249">
    <property type="entry name" value="Metalloenz_LuxS/M16"/>
</dbReference>
<dbReference type="InterPro" id="IPR003815">
    <property type="entry name" value="S-ribosylhomocysteinase"/>
</dbReference>
<dbReference type="NCBIfam" id="NF002604">
    <property type="entry name" value="PRK02260.1-4"/>
    <property type="match status" value="1"/>
</dbReference>
<dbReference type="PANTHER" id="PTHR35799">
    <property type="entry name" value="S-RIBOSYLHOMOCYSTEINE LYASE"/>
    <property type="match status" value="1"/>
</dbReference>
<dbReference type="PANTHER" id="PTHR35799:SF1">
    <property type="entry name" value="S-RIBOSYLHOMOCYSTEINE LYASE"/>
    <property type="match status" value="1"/>
</dbReference>
<dbReference type="Pfam" id="PF02664">
    <property type="entry name" value="LuxS"/>
    <property type="match status" value="1"/>
</dbReference>
<dbReference type="PIRSF" id="PIRSF006160">
    <property type="entry name" value="AI2"/>
    <property type="match status" value="1"/>
</dbReference>
<dbReference type="PRINTS" id="PR01487">
    <property type="entry name" value="LUXSPROTEIN"/>
</dbReference>
<dbReference type="SUPFAM" id="SSF63411">
    <property type="entry name" value="LuxS/MPP-like metallohydrolase"/>
    <property type="match status" value="1"/>
</dbReference>
<protein>
    <recommendedName>
        <fullName evidence="1">S-ribosylhomocysteine lyase</fullName>
        <ecNumber evidence="1">4.4.1.21</ecNumber>
    </recommendedName>
    <alternativeName>
        <fullName evidence="1">AI-2 synthesis protein</fullName>
    </alternativeName>
    <alternativeName>
        <fullName evidence="1">Autoinducer-2 production protein LuxS</fullName>
    </alternativeName>
</protein>
<keyword id="KW-0071">Autoinducer synthesis</keyword>
<keyword id="KW-0408">Iron</keyword>
<keyword id="KW-0456">Lyase</keyword>
<keyword id="KW-0479">Metal-binding</keyword>
<keyword id="KW-0673">Quorum sensing</keyword>
<keyword id="KW-1185">Reference proteome</keyword>
<feature type="chain" id="PRO_0000172219" description="S-ribosylhomocysteine lyase">
    <location>
        <begin position="1"/>
        <end position="159"/>
    </location>
</feature>
<feature type="binding site" evidence="1">
    <location>
        <position position="53"/>
    </location>
    <ligand>
        <name>Fe cation</name>
        <dbReference type="ChEBI" id="CHEBI:24875"/>
    </ligand>
</feature>
<feature type="binding site" evidence="1">
    <location>
        <position position="57"/>
    </location>
    <ligand>
        <name>Fe cation</name>
        <dbReference type="ChEBI" id="CHEBI:24875"/>
    </ligand>
</feature>
<feature type="binding site" evidence="1">
    <location>
        <position position="124"/>
    </location>
    <ligand>
        <name>Fe cation</name>
        <dbReference type="ChEBI" id="CHEBI:24875"/>
    </ligand>
</feature>
<accession>Q6AQW6</accession>
<gene>
    <name evidence="1" type="primary">luxS</name>
    <name type="ordered locus">DP0529</name>
</gene>
<name>LUXS_DESPS</name>
<proteinExistence type="inferred from homology"/>
<organism>
    <name type="scientific">Desulfotalea psychrophila (strain LSv54 / DSM 12343)</name>
    <dbReference type="NCBI Taxonomy" id="177439"/>
    <lineage>
        <taxon>Bacteria</taxon>
        <taxon>Pseudomonadati</taxon>
        <taxon>Thermodesulfobacteriota</taxon>
        <taxon>Desulfobulbia</taxon>
        <taxon>Desulfobulbales</taxon>
        <taxon>Desulfocapsaceae</taxon>
        <taxon>Desulfotalea</taxon>
    </lineage>
</organism>
<comment type="function">
    <text evidence="1">Involved in the synthesis of autoinducer 2 (AI-2) which is secreted by bacteria and is used to communicate both the cell density and the metabolic potential of the environment. The regulation of gene expression in response to changes in cell density is called quorum sensing. Catalyzes the transformation of S-ribosylhomocysteine (RHC) to homocysteine (HC) and 4,5-dihydroxy-2,3-pentadione (DPD).</text>
</comment>
<comment type="catalytic activity">
    <reaction evidence="1">
        <text>S-(5-deoxy-D-ribos-5-yl)-L-homocysteine = (S)-4,5-dihydroxypentane-2,3-dione + L-homocysteine</text>
        <dbReference type="Rhea" id="RHEA:17753"/>
        <dbReference type="ChEBI" id="CHEBI:29484"/>
        <dbReference type="ChEBI" id="CHEBI:58195"/>
        <dbReference type="ChEBI" id="CHEBI:58199"/>
        <dbReference type="EC" id="4.4.1.21"/>
    </reaction>
</comment>
<comment type="cofactor">
    <cofactor evidence="1">
        <name>Fe cation</name>
        <dbReference type="ChEBI" id="CHEBI:24875"/>
    </cofactor>
    <text evidence="1">Binds 1 Fe cation per subunit.</text>
</comment>
<comment type="subunit">
    <text evidence="1">Homodimer.</text>
</comment>
<comment type="similarity">
    <text evidence="1">Belongs to the LuxS family.</text>
</comment>